<dbReference type="EC" id="4.6.1.17" evidence="1"/>
<dbReference type="EMBL" id="AP006627">
    <property type="protein sequence ID" value="BAD63430.1"/>
    <property type="molecule type" value="Genomic_DNA"/>
</dbReference>
<dbReference type="RefSeq" id="WP_011245746.1">
    <property type="nucleotide sequence ID" value="NC_006582.1"/>
</dbReference>
<dbReference type="SMR" id="Q5WJM5"/>
<dbReference type="STRING" id="66692.ABC0891"/>
<dbReference type="KEGG" id="bcl:ABC0891"/>
<dbReference type="eggNOG" id="COG0315">
    <property type="taxonomic scope" value="Bacteria"/>
</dbReference>
<dbReference type="HOGENOM" id="CLU_074693_1_1_9"/>
<dbReference type="OrthoDB" id="9794429at2"/>
<dbReference type="UniPathway" id="UPA00344"/>
<dbReference type="Proteomes" id="UP000001168">
    <property type="component" value="Chromosome"/>
</dbReference>
<dbReference type="GO" id="GO:0061799">
    <property type="term" value="F:cyclic pyranopterin monophosphate synthase activity"/>
    <property type="evidence" value="ECO:0007669"/>
    <property type="project" value="UniProtKB-UniRule"/>
</dbReference>
<dbReference type="GO" id="GO:0006777">
    <property type="term" value="P:Mo-molybdopterin cofactor biosynthetic process"/>
    <property type="evidence" value="ECO:0007669"/>
    <property type="project" value="UniProtKB-UniRule"/>
</dbReference>
<dbReference type="CDD" id="cd01420">
    <property type="entry name" value="MoaC_PE"/>
    <property type="match status" value="1"/>
</dbReference>
<dbReference type="Gene3D" id="3.30.70.640">
    <property type="entry name" value="Molybdopterin cofactor biosynthesis C (MoaC) domain"/>
    <property type="match status" value="1"/>
</dbReference>
<dbReference type="HAMAP" id="MF_01224_B">
    <property type="entry name" value="MoaC_B"/>
    <property type="match status" value="1"/>
</dbReference>
<dbReference type="InterPro" id="IPR023045">
    <property type="entry name" value="MoaC"/>
</dbReference>
<dbReference type="InterPro" id="IPR047594">
    <property type="entry name" value="MoaC_bact/euk"/>
</dbReference>
<dbReference type="InterPro" id="IPR036522">
    <property type="entry name" value="MoaC_sf"/>
</dbReference>
<dbReference type="InterPro" id="IPR050105">
    <property type="entry name" value="MoCo_biosynth_MoaA/MoaC"/>
</dbReference>
<dbReference type="InterPro" id="IPR002820">
    <property type="entry name" value="Mopterin_CF_biosynth-C_dom"/>
</dbReference>
<dbReference type="NCBIfam" id="TIGR00581">
    <property type="entry name" value="moaC"/>
    <property type="match status" value="1"/>
</dbReference>
<dbReference type="NCBIfam" id="NF006870">
    <property type="entry name" value="PRK09364.1"/>
    <property type="match status" value="1"/>
</dbReference>
<dbReference type="PANTHER" id="PTHR22960">
    <property type="entry name" value="MOLYBDOPTERIN COFACTOR SYNTHESIS PROTEIN A"/>
    <property type="match status" value="1"/>
</dbReference>
<dbReference type="Pfam" id="PF01967">
    <property type="entry name" value="MoaC"/>
    <property type="match status" value="1"/>
</dbReference>
<dbReference type="SUPFAM" id="SSF55040">
    <property type="entry name" value="Molybdenum cofactor biosynthesis protein C, MoaC"/>
    <property type="match status" value="1"/>
</dbReference>
<feature type="chain" id="PRO_1000054071" description="Cyclic pyranopterin monophosphate synthase">
    <location>
        <begin position="1"/>
        <end position="166"/>
    </location>
</feature>
<feature type="active site" evidence="1">
    <location>
        <position position="130"/>
    </location>
</feature>
<feature type="binding site" evidence="1">
    <location>
        <begin position="75"/>
        <end position="77"/>
    </location>
    <ligand>
        <name>substrate</name>
    </ligand>
</feature>
<feature type="binding site" evidence="1">
    <location>
        <begin position="115"/>
        <end position="116"/>
    </location>
    <ligand>
        <name>substrate</name>
    </ligand>
</feature>
<name>MOAC_SHOC1</name>
<sequence>MSQFSHYNEDGLPKMVDISSKSATSRTATAECRVRISPRLYEAIHEQSLKKGNPLPVAQVAGIMAAKKTAEWIPMCHPILIQGTDLSFKYEPVKDGYMLVIGATVTVDGNTGVEMEALTAVTAAALTFYDMCKAVDKSMVIEETLLVKKTGGKNGDFYHPRREKMD</sequence>
<proteinExistence type="inferred from homology"/>
<comment type="function">
    <text evidence="1">Catalyzes the conversion of (8S)-3',8-cyclo-7,8-dihydroguanosine 5'-triphosphate to cyclic pyranopterin monophosphate (cPMP).</text>
</comment>
<comment type="catalytic activity">
    <reaction evidence="1">
        <text>(8S)-3',8-cyclo-7,8-dihydroguanosine 5'-triphosphate = cyclic pyranopterin phosphate + diphosphate</text>
        <dbReference type="Rhea" id="RHEA:49580"/>
        <dbReference type="ChEBI" id="CHEBI:33019"/>
        <dbReference type="ChEBI" id="CHEBI:59648"/>
        <dbReference type="ChEBI" id="CHEBI:131766"/>
        <dbReference type="EC" id="4.6.1.17"/>
    </reaction>
</comment>
<comment type="pathway">
    <text evidence="1">Cofactor biosynthesis; molybdopterin biosynthesis.</text>
</comment>
<comment type="subunit">
    <text evidence="1">Homohexamer; trimer of dimers.</text>
</comment>
<comment type="similarity">
    <text evidence="1">Belongs to the MoaC family.</text>
</comment>
<accession>Q5WJM5</accession>
<protein>
    <recommendedName>
        <fullName evidence="1">Cyclic pyranopterin monophosphate synthase</fullName>
        <ecNumber evidence="1">4.6.1.17</ecNumber>
    </recommendedName>
    <alternativeName>
        <fullName evidence="1">Molybdenum cofactor biosynthesis protein C</fullName>
    </alternativeName>
</protein>
<gene>
    <name evidence="1" type="primary">moaC</name>
    <name type="ordered locus">ABC0891</name>
</gene>
<reference key="1">
    <citation type="submission" date="2003-10" db="EMBL/GenBank/DDBJ databases">
        <title>The complete genome sequence of the alkaliphilic Bacillus clausii KSM-K16.</title>
        <authorList>
            <person name="Takaki Y."/>
            <person name="Kageyama Y."/>
            <person name="Shimamura S."/>
            <person name="Suzuki H."/>
            <person name="Nishi S."/>
            <person name="Hatada Y."/>
            <person name="Kawai S."/>
            <person name="Ito S."/>
            <person name="Horikoshi K."/>
        </authorList>
    </citation>
    <scope>NUCLEOTIDE SEQUENCE [LARGE SCALE GENOMIC DNA]</scope>
    <source>
        <strain>KSM-K16</strain>
    </source>
</reference>
<evidence type="ECO:0000255" key="1">
    <source>
        <dbReference type="HAMAP-Rule" id="MF_01224"/>
    </source>
</evidence>
<organism>
    <name type="scientific">Shouchella clausii (strain KSM-K16)</name>
    <name type="common">Alkalihalobacillus clausii</name>
    <dbReference type="NCBI Taxonomy" id="66692"/>
    <lineage>
        <taxon>Bacteria</taxon>
        <taxon>Bacillati</taxon>
        <taxon>Bacillota</taxon>
        <taxon>Bacilli</taxon>
        <taxon>Bacillales</taxon>
        <taxon>Bacillaceae</taxon>
        <taxon>Shouchella</taxon>
    </lineage>
</organism>
<keyword id="KW-0456">Lyase</keyword>
<keyword id="KW-0501">Molybdenum cofactor biosynthesis</keyword>
<keyword id="KW-1185">Reference proteome</keyword>